<keyword id="KW-0456">Lyase</keyword>
<proteinExistence type="inferred from homology"/>
<name>HYPE_RHILV</name>
<gene>
    <name evidence="3" type="primary">hypE</name>
</gene>
<dbReference type="EC" id="4.2.1.-" evidence="1"/>
<dbReference type="EMBL" id="X52974">
    <property type="protein sequence ID" value="CAA37164.1"/>
    <property type="molecule type" value="Genomic_DNA"/>
</dbReference>
<dbReference type="EMBL" id="Z36982">
    <property type="protein sequence ID" value="CAA85445.1"/>
    <property type="molecule type" value="Genomic_DNA"/>
</dbReference>
<dbReference type="PIR" id="S32878">
    <property type="entry name" value="S32878"/>
</dbReference>
<dbReference type="RefSeq" id="WP_018517062.1">
    <property type="nucleotide sequence ID" value="NZ_WIEJ01000010.1"/>
</dbReference>
<dbReference type="SMR" id="P40599"/>
<dbReference type="UniPathway" id="UPA00335"/>
<dbReference type="GO" id="GO:0016829">
    <property type="term" value="F:lyase activity"/>
    <property type="evidence" value="ECO:0007669"/>
    <property type="project" value="UniProtKB-KW"/>
</dbReference>
<dbReference type="GO" id="GO:0051604">
    <property type="term" value="P:protein maturation"/>
    <property type="evidence" value="ECO:0007669"/>
    <property type="project" value="TreeGrafter"/>
</dbReference>
<dbReference type="CDD" id="cd02197">
    <property type="entry name" value="HypE"/>
    <property type="match status" value="1"/>
</dbReference>
<dbReference type="Gene3D" id="3.90.650.10">
    <property type="entry name" value="PurM-like C-terminal domain"/>
    <property type="match status" value="1"/>
</dbReference>
<dbReference type="Gene3D" id="3.30.1330.10">
    <property type="entry name" value="PurM-like, N-terminal domain"/>
    <property type="match status" value="1"/>
</dbReference>
<dbReference type="InterPro" id="IPR011854">
    <property type="entry name" value="HypE"/>
</dbReference>
<dbReference type="InterPro" id="IPR010918">
    <property type="entry name" value="PurM-like_C_dom"/>
</dbReference>
<dbReference type="InterPro" id="IPR036676">
    <property type="entry name" value="PurM-like_C_sf"/>
</dbReference>
<dbReference type="InterPro" id="IPR016188">
    <property type="entry name" value="PurM-like_N"/>
</dbReference>
<dbReference type="InterPro" id="IPR036921">
    <property type="entry name" value="PurM-like_N_sf"/>
</dbReference>
<dbReference type="NCBIfam" id="TIGR02124">
    <property type="entry name" value="hypE"/>
    <property type="match status" value="1"/>
</dbReference>
<dbReference type="PANTHER" id="PTHR30303:SF0">
    <property type="entry name" value="CARBAMOYL DEHYDRATASE HYPE"/>
    <property type="match status" value="1"/>
</dbReference>
<dbReference type="PANTHER" id="PTHR30303">
    <property type="entry name" value="HYDROGENASE ISOENZYMES FORMATION PROTEIN HYPE"/>
    <property type="match status" value="1"/>
</dbReference>
<dbReference type="Pfam" id="PF00586">
    <property type="entry name" value="AIRS"/>
    <property type="match status" value="1"/>
</dbReference>
<dbReference type="Pfam" id="PF02769">
    <property type="entry name" value="AIRS_C"/>
    <property type="match status" value="1"/>
</dbReference>
<dbReference type="PIRSF" id="PIRSF005644">
    <property type="entry name" value="Hdrgns_mtr_HypE"/>
    <property type="match status" value="1"/>
</dbReference>
<dbReference type="SUPFAM" id="SSF56042">
    <property type="entry name" value="PurM C-terminal domain-like"/>
    <property type="match status" value="1"/>
</dbReference>
<dbReference type="SUPFAM" id="SSF55326">
    <property type="entry name" value="PurM N-terminal domain-like"/>
    <property type="match status" value="1"/>
</dbReference>
<reference key="1">
    <citation type="journal article" date="1993" name="Mol. Microbiol.">
        <title>Molecular analysis of a microaerobically induced operon required for hydrogenase synthesis in Rhizobium leguminosarum biovar viciae.</title>
        <authorList>
            <person name="Rey L."/>
            <person name="Murillo J."/>
            <person name="Hernando Y."/>
            <person name="Hidalgo E."/>
            <person name="Cabrera E."/>
            <person name="Imperial J."/>
            <person name="Ruiz-Argueso T."/>
        </authorList>
    </citation>
    <scope>NUCLEOTIDE SEQUENCE [GENOMIC DNA]</scope>
    <scope>DISRUPTION PHENOTYPE</scope>
    <source>
        <strain>128c53</strain>
    </source>
</reference>
<reference key="2">
    <citation type="journal article" date="1997" name="Mol. Plant Microbe Interact.">
        <title>Organization of the hup-region and its differential transcription in non-symbiotic and symbiotic cells of Rhizobium leguminosarum bv. viciae B10.</title>
        <authorList>
            <person name="Brito B."/>
            <person name="Palacios J.M."/>
            <person name="Imperial J."/>
            <person name="Ruiz-Argueso T."/>
            <person name="Yang W.C."/>
            <person name="Bisseling T."/>
            <person name="Schmitt H."/>
            <person name="Kerl V."/>
            <person name="Bauer T."/>
            <person name="Kokotek W."/>
            <person name="Lotz W."/>
        </authorList>
    </citation>
    <scope>NUCLEOTIDE SEQUENCE [GENOMIC DNA]</scope>
    <source>
        <strain>B10</strain>
    </source>
</reference>
<accession>P40599</accession>
<sequence>MNMMIKAYKRKLDVANGRIDLSHGAGGRAMGQLIEGIFHKAFDNDWLRAGNDQSAFSVPGGRMVMTTDGYVVSPLFFPGGNIGTLAVHGTINDIAMAGAVPLYLSASFIIEEGFPLVDLERIADSMGAASREAGVPIITGDTKVVERGKADGVFISTAGIGMAPDGLDLRSDAARPGDAVIISGSIGDHGVAVMSKRENLEFDTDIVSDSAALHGLVADMVAAGGAHIRLMRDPTRGGIAATLNEIASQSRVGFRIDEEAIPMKPEVAAACEFLGLDPLNVANEGKLVAVVAPEGADAVLAAIHAHPLGAEAALIGHVVADDNYFVQMVTSFGGGRIVDWLSGEQLPRIC</sequence>
<protein>
    <recommendedName>
        <fullName evidence="1">Carbamoyl dehydratase HypE</fullName>
        <ecNumber evidence="1">4.2.1.-</ecNumber>
    </recommendedName>
    <alternativeName>
        <fullName evidence="1">Hydrogenase maturation factor HypE</fullName>
    </alternativeName>
</protein>
<feature type="chain" id="PRO_0000201460" description="Carbamoyl dehydratase HypE">
    <location>
        <begin position="1"/>
        <end position="350"/>
    </location>
</feature>
<feature type="modified residue" description="S-carbamoylcysteine" evidence="1">
    <location>
        <position position="350"/>
    </location>
</feature>
<feature type="modified residue" description="S-cyanocysteine" evidence="1">
    <location>
        <position position="350"/>
    </location>
</feature>
<comment type="function">
    <text evidence="1">Involved in the maturation of [NiFe] hydrogenases. Along with HypF, it catalyzes the synthesis of the CN ligands of the active site iron of [NiFe]-hydrogenases. HypE catalyzes the ATP-dependent dehydration of the carboxamido group attached to its C-terminal cysteine to a cyano group.</text>
</comment>
<comment type="catalytic activity">
    <reaction evidence="1">
        <text>C-terminal S-carboxamide-L-cysteinyl-[HypE protein] + ATP = C-terminal S-cyanate-L-cysteinyl-[HypE protein] + ADP + phosphate + H(+)</text>
        <dbReference type="Rhea" id="RHEA:55644"/>
        <dbReference type="Rhea" id="RHEA-COMP:14247"/>
        <dbReference type="Rhea" id="RHEA-COMP:14248"/>
        <dbReference type="ChEBI" id="CHEBI:15378"/>
        <dbReference type="ChEBI" id="CHEBI:30616"/>
        <dbReference type="ChEBI" id="CHEBI:43474"/>
        <dbReference type="ChEBI" id="CHEBI:139126"/>
        <dbReference type="ChEBI" id="CHEBI:139127"/>
        <dbReference type="ChEBI" id="CHEBI:456216"/>
    </reaction>
</comment>
<comment type="pathway">
    <text evidence="1">Protein modification; [NiFe] hydrogenase maturation.</text>
</comment>
<comment type="PTM">
    <text evidence="1">Modified by HypF, which adds a carboxamido group to the thiolate of the C-terminal cysteine, yielding a protein-S-carboxamide. The carboxamido group is then dehydrated by HypE itself to yield a protein-thiocyanate.</text>
</comment>
<comment type="disruption phenotype">
    <text evidence="2">Insertion mutant lacks any hydrogenase activity in symbiosis with peas, but is still able to synthesize the polypeptide for the hydrogenase large subunit.</text>
</comment>
<comment type="similarity">
    <text evidence="4">Belongs to the HypE family.</text>
</comment>
<organism>
    <name type="scientific">Rhizobium leguminosarum bv. viciae</name>
    <dbReference type="NCBI Taxonomy" id="387"/>
    <lineage>
        <taxon>Bacteria</taxon>
        <taxon>Pseudomonadati</taxon>
        <taxon>Pseudomonadota</taxon>
        <taxon>Alphaproteobacteria</taxon>
        <taxon>Hyphomicrobiales</taxon>
        <taxon>Rhizobiaceae</taxon>
        <taxon>Rhizobium/Agrobacterium group</taxon>
        <taxon>Rhizobium</taxon>
    </lineage>
</organism>
<evidence type="ECO:0000250" key="1">
    <source>
        <dbReference type="UniProtKB" id="P24193"/>
    </source>
</evidence>
<evidence type="ECO:0000269" key="2">
    <source>
    </source>
</evidence>
<evidence type="ECO:0000303" key="3">
    <source>
    </source>
</evidence>
<evidence type="ECO:0000305" key="4"/>